<organism>
    <name type="scientific">Penicillium janthinellum</name>
    <name type="common">Penicillium vitale</name>
    <dbReference type="NCBI Taxonomy" id="5079"/>
    <lineage>
        <taxon>Eukaryota</taxon>
        <taxon>Fungi</taxon>
        <taxon>Dikarya</taxon>
        <taxon>Ascomycota</taxon>
        <taxon>Pezizomycotina</taxon>
        <taxon>Eurotiomycetes</taxon>
        <taxon>Eurotiomycetidae</taxon>
        <taxon>Eurotiales</taxon>
        <taxon>Aspergillaceae</taxon>
        <taxon>Penicillium</taxon>
    </lineage>
</organism>
<reference key="1">
    <citation type="journal article" date="1998" name="Bioorg. Khim.">
        <title>Complete amino acid sequence of catalase from the fungus Penicillium vitale.</title>
        <authorList>
            <person name="Kozlov E.A."/>
            <person name="Levitina T.L."/>
            <person name="Bobrovskaia M.T."/>
            <person name="Gudkova L.V."/>
            <person name="Latyshko N.V."/>
            <person name="Radomskii N.F."/>
        </authorList>
    </citation>
    <scope>PROTEIN SEQUENCE</scope>
</reference>
<keyword id="KW-0903">Direct protein sequencing</keyword>
<keyword id="KW-0349">Heme</keyword>
<keyword id="KW-0376">Hydrogen peroxide</keyword>
<keyword id="KW-0408">Iron</keyword>
<keyword id="KW-0479">Metal-binding</keyword>
<keyword id="KW-0560">Oxidoreductase</keyword>
<keyword id="KW-0575">Peroxidase</keyword>
<accession>P81138</accession>
<protein>
    <recommendedName>
        <fullName>Catalase</fullName>
        <ecNumber>1.11.1.6</ecNumber>
    </recommendedName>
</protein>
<sequence length="696" mass="77404">TASGKLQRKFLDRFAISMGRGVALGKTYGTLGAASRGATLLQDLLFTEIIFAFDRERVPERAVHARGTGAHGTFLSYEDWSNLTAASFLSAEGKFTPEMTRFSTVSGARGSADTARDVHGFATRFYVDEGNFDIVGNNIPVFFIWDVIIEPTLMALHAQKPNPRFHLPRGQQDPNRISDNLTARGDSLAQGSQISSERGSPKAYSNTEPNKHRSFRLVTDNGKQFQCSNHWQPLQGFIDLGVEEAWRFPEEGEGYVAENLFESIELLTVGDEELEIQSMSFNNDLRERFNSSEVTKSSVVRLVPLITQGKLVFNKNIQMLFNEVIGAMFQPGHIVRGVDFTEDPLLQGRLFSYLDTQLNRHGPNIQQLGFNRPPRAPIHNNNRDGAGEMIDLPPFASFVETQEWGAKDIKQTAVGQNKFDQEHRFSHWKFGVNGFVHTRNDDNVTHARGFFTAPERGQQKKRVAAFDRMFTVVGLSVDGQQANSDQYADFDAAAGKKVAKAIGVEAPKPNSNYFHPTDVFGEHIAASGTKYGVPEGNTKGVLLASVNKPASIAQGAKLQVVASSGDFAEFFISAKQLNMREVTQGIIPLVPVLKLAKLDLGKTFRFQLMQVGNIEELERFGFDLPDLTDKQVDLSAMGMFETTFRPTSRAAQFEQGKTKLVKGLQGKNAFMDRALKQPSNNREKIQRFADRFAVQD</sequence>
<comment type="function">
    <text>Occurs in almost all aerobically respiring organisms and serves to protect cells from the toxic effects of hydrogen peroxide.</text>
</comment>
<comment type="catalytic activity">
    <reaction evidence="2">
        <text>2 H2O2 = O2 + 2 H2O</text>
        <dbReference type="Rhea" id="RHEA:20309"/>
        <dbReference type="ChEBI" id="CHEBI:15377"/>
        <dbReference type="ChEBI" id="CHEBI:15379"/>
        <dbReference type="ChEBI" id="CHEBI:16240"/>
        <dbReference type="EC" id="1.11.1.6"/>
    </reaction>
</comment>
<comment type="cofactor">
    <cofactor>
        <name>heme</name>
        <dbReference type="ChEBI" id="CHEBI:30413"/>
    </cofactor>
</comment>
<comment type="similarity">
    <text evidence="4">Belongs to the catalase family.</text>
</comment>
<proteinExistence type="evidence at protein level"/>
<dbReference type="EC" id="1.11.1.6"/>
<dbReference type="SMR" id="P81138"/>
<dbReference type="PeroxiBase" id="5322">
    <property type="entry name" value="PjaKat01"/>
</dbReference>
<dbReference type="GO" id="GO:0005829">
    <property type="term" value="C:cytosol"/>
    <property type="evidence" value="ECO:0007669"/>
    <property type="project" value="TreeGrafter"/>
</dbReference>
<dbReference type="GO" id="GO:0004096">
    <property type="term" value="F:catalase activity"/>
    <property type="evidence" value="ECO:0007669"/>
    <property type="project" value="UniProtKB-EC"/>
</dbReference>
<dbReference type="GO" id="GO:0020037">
    <property type="term" value="F:heme binding"/>
    <property type="evidence" value="ECO:0007669"/>
    <property type="project" value="InterPro"/>
</dbReference>
<dbReference type="GO" id="GO:0046872">
    <property type="term" value="F:metal ion binding"/>
    <property type="evidence" value="ECO:0007669"/>
    <property type="project" value="UniProtKB-KW"/>
</dbReference>
<dbReference type="GO" id="GO:0042744">
    <property type="term" value="P:hydrogen peroxide catabolic process"/>
    <property type="evidence" value="ECO:0007669"/>
    <property type="project" value="UniProtKB-KW"/>
</dbReference>
<dbReference type="GO" id="GO:0006979">
    <property type="term" value="P:response to oxidative stress"/>
    <property type="evidence" value="ECO:0007669"/>
    <property type="project" value="InterPro"/>
</dbReference>
<dbReference type="CDD" id="cd00328">
    <property type="entry name" value="catalase"/>
    <property type="match status" value="1"/>
</dbReference>
<dbReference type="Gene3D" id="2.40.180.10">
    <property type="entry name" value="Catalase core domain"/>
    <property type="match status" value="1"/>
</dbReference>
<dbReference type="InterPro" id="IPR018028">
    <property type="entry name" value="Catalase"/>
</dbReference>
<dbReference type="InterPro" id="IPR024708">
    <property type="entry name" value="Catalase_AS"/>
</dbReference>
<dbReference type="InterPro" id="IPR024712">
    <property type="entry name" value="Catalase_clade2"/>
</dbReference>
<dbReference type="InterPro" id="IPR011614">
    <property type="entry name" value="Catalase_core"/>
</dbReference>
<dbReference type="InterPro" id="IPR002226">
    <property type="entry name" value="Catalase_haem_BS"/>
</dbReference>
<dbReference type="InterPro" id="IPR020835">
    <property type="entry name" value="Catalase_sf"/>
</dbReference>
<dbReference type="PANTHER" id="PTHR42821">
    <property type="entry name" value="CATALASE"/>
    <property type="match status" value="1"/>
</dbReference>
<dbReference type="PANTHER" id="PTHR42821:SF3">
    <property type="entry name" value="CATALASE B"/>
    <property type="match status" value="1"/>
</dbReference>
<dbReference type="Pfam" id="PF00199">
    <property type="entry name" value="Catalase"/>
    <property type="match status" value="1"/>
</dbReference>
<dbReference type="PRINTS" id="PR00067">
    <property type="entry name" value="CATALASE"/>
</dbReference>
<dbReference type="SMART" id="SM01060">
    <property type="entry name" value="Catalase"/>
    <property type="match status" value="1"/>
</dbReference>
<dbReference type="SUPFAM" id="SSF56634">
    <property type="entry name" value="Heme-dependent catalase-like"/>
    <property type="match status" value="1"/>
</dbReference>
<dbReference type="PROSITE" id="PS00437">
    <property type="entry name" value="CATALASE_1"/>
    <property type="match status" value="1"/>
</dbReference>
<dbReference type="PROSITE" id="PS00438">
    <property type="entry name" value="CATALASE_2"/>
    <property type="match status" value="1"/>
</dbReference>
<dbReference type="PROSITE" id="PS51402">
    <property type="entry name" value="CATALASE_3"/>
    <property type="match status" value="1"/>
</dbReference>
<evidence type="ECO:0000250" key="1"/>
<evidence type="ECO:0000255" key="2">
    <source>
        <dbReference type="PROSITE-ProRule" id="PRU10013"/>
    </source>
</evidence>
<evidence type="ECO:0000256" key="3">
    <source>
        <dbReference type="SAM" id="MobiDB-lite"/>
    </source>
</evidence>
<evidence type="ECO:0000305" key="4"/>
<name>CAT1_PENJA</name>
<feature type="chain" id="PRO_0000084925" description="Catalase">
    <location>
        <begin position="1"/>
        <end position="696"/>
    </location>
</feature>
<feature type="region of interest" description="Disordered" evidence="3">
    <location>
        <begin position="187"/>
        <end position="211"/>
    </location>
</feature>
<feature type="compositionally biased region" description="Polar residues" evidence="3">
    <location>
        <begin position="189"/>
        <end position="208"/>
    </location>
</feature>
<feature type="active site" evidence="2">
    <location>
        <position position="64"/>
    </location>
</feature>
<feature type="active site" evidence="2">
    <location>
        <position position="137"/>
    </location>
</feature>
<feature type="binding site" description="axial binding residue" evidence="1">
    <location>
        <position position="353"/>
    </location>
    <ligand>
        <name>heme</name>
        <dbReference type="ChEBI" id="CHEBI:30413"/>
    </ligand>
    <ligandPart>
        <name>Fe</name>
        <dbReference type="ChEBI" id="CHEBI:18248"/>
    </ligandPart>
</feature>